<protein>
    <recommendedName>
        <fullName>Omega-hexatoxin-Hi2b</fullName>
        <shortName>Omega-HXTX-Hi2b</shortName>
    </recommendedName>
    <alternativeName>
        <fullName>Omega-atracotoxin-Hi2b</fullName>
        <shortName>Omega-AcTx-Hi2b</shortName>
    </alternativeName>
</protein>
<comment type="function">
    <text evidence="1">Potent inhibitor of insect, but not mammalian, voltage-gated calcium channels (Cav).</text>
</comment>
<comment type="subcellular location">
    <subcellularLocation>
        <location evidence="5">Secreted</location>
    </subcellularLocation>
</comment>
<comment type="tissue specificity">
    <text evidence="5">Expressed by the venom gland.</text>
</comment>
<comment type="domain">
    <text evidence="4">The presence of a 'disulfide through disulfide knot' structurally defines this protein as a knottin.</text>
</comment>
<comment type="similarity">
    <text evidence="4">Belongs to the neurotoxin 15 family. 02 (omega-actx) subfamily.</text>
</comment>
<reference key="1">
    <citation type="journal article" date="2001" name="J. Biol. Chem.">
        <title>Discovery and structure of a potent and highly specific blocker of insect calcium channels.</title>
        <authorList>
            <person name="Wang X.-H."/>
            <person name="Connor M."/>
            <person name="Wilson D."/>
            <person name="Wilson H.I."/>
            <person name="Nicholson G.M."/>
            <person name="Smith R."/>
            <person name="Shaw D."/>
            <person name="Mackay J.P."/>
            <person name="Alewood P.F."/>
            <person name="Christie M.J."/>
            <person name="King G.F."/>
        </authorList>
    </citation>
    <scope>NUCLEOTIDE SEQUENCE [MRNA]</scope>
    <source>
        <tissue>Venom gland</tissue>
    </source>
</reference>
<feature type="signal peptide" evidence="3">
    <location>
        <begin position="1"/>
        <end position="23"/>
    </location>
</feature>
<feature type="propeptide" id="PRO_0000035548" evidence="2">
    <location>
        <begin position="24"/>
        <end position="56"/>
    </location>
</feature>
<feature type="chain" id="PRO_0000035549" description="Omega-hexatoxin-Hi2b" evidence="2">
    <location>
        <begin position="57"/>
        <end position="98"/>
    </location>
</feature>
<feature type="propeptide" id="PRO_0000035550" evidence="2">
    <location>
        <begin position="100"/>
        <end position="102"/>
    </location>
</feature>
<feature type="modified residue" description="Leucine amide" evidence="2">
    <location>
        <position position="98"/>
    </location>
</feature>
<feature type="disulfide bond" evidence="1">
    <location>
        <begin position="61"/>
        <end position="75"/>
    </location>
</feature>
<feature type="disulfide bond" evidence="1">
    <location>
        <begin position="68"/>
        <end position="81"/>
    </location>
</feature>
<feature type="disulfide bond" evidence="1">
    <location>
        <begin position="74"/>
        <end position="86"/>
    </location>
</feature>
<evidence type="ECO:0000250" key="1">
    <source>
        <dbReference type="UniProtKB" id="P82852"/>
    </source>
</evidence>
<evidence type="ECO:0000250" key="2">
    <source>
        <dbReference type="UniProtKB" id="Q9BJV9"/>
    </source>
</evidence>
<evidence type="ECO:0000255" key="3"/>
<evidence type="ECO:0000305" key="4"/>
<evidence type="ECO:0000305" key="5">
    <source>
    </source>
</evidence>
<name>TOT2B_HADIN</name>
<accession>Q9BJW0</accession>
<organism>
    <name type="scientific">Hadronyche infensa</name>
    <name type="common">Fraser island funnel-web spider</name>
    <name type="synonym">Atrax infensus</name>
    <dbReference type="NCBI Taxonomy" id="153481"/>
    <lineage>
        <taxon>Eukaryota</taxon>
        <taxon>Metazoa</taxon>
        <taxon>Ecdysozoa</taxon>
        <taxon>Arthropoda</taxon>
        <taxon>Chelicerata</taxon>
        <taxon>Arachnida</taxon>
        <taxon>Araneae</taxon>
        <taxon>Mygalomorphae</taxon>
        <taxon>Hexathelidae</taxon>
        <taxon>Hadronyche</taxon>
    </lineage>
</organism>
<dbReference type="EMBL" id="AF329442">
    <property type="protein sequence ID" value="AAK17945.1"/>
    <property type="molecule type" value="mRNA"/>
</dbReference>
<dbReference type="ArachnoServer" id="AS000582">
    <property type="toxin name" value="omega-hexatoxin-Hi2b"/>
</dbReference>
<dbReference type="GO" id="GO:0005576">
    <property type="term" value="C:extracellular region"/>
    <property type="evidence" value="ECO:0007669"/>
    <property type="project" value="UniProtKB-SubCell"/>
</dbReference>
<dbReference type="GO" id="GO:0005246">
    <property type="term" value="F:calcium channel regulator activity"/>
    <property type="evidence" value="ECO:0007669"/>
    <property type="project" value="UniProtKB-KW"/>
</dbReference>
<dbReference type="GO" id="GO:0019871">
    <property type="term" value="F:sodium channel inhibitor activity"/>
    <property type="evidence" value="ECO:0007669"/>
    <property type="project" value="InterPro"/>
</dbReference>
<dbReference type="GO" id="GO:0090729">
    <property type="term" value="F:toxin activity"/>
    <property type="evidence" value="ECO:0007669"/>
    <property type="project" value="UniProtKB-KW"/>
</dbReference>
<dbReference type="Gene3D" id="4.10.40.10">
    <property type="match status" value="1"/>
</dbReference>
<dbReference type="InterPro" id="IPR013139">
    <property type="entry name" value="Omega_atracotoxin_CS2"/>
</dbReference>
<dbReference type="InterPro" id="IPR012628">
    <property type="entry name" value="Toxin_23"/>
</dbReference>
<dbReference type="Pfam" id="PF08093">
    <property type="entry name" value="Toxin_23"/>
    <property type="match status" value="1"/>
</dbReference>
<dbReference type="SUPFAM" id="SSF57059">
    <property type="entry name" value="omega toxin-like"/>
    <property type="match status" value="1"/>
</dbReference>
<dbReference type="PROSITE" id="PS60017">
    <property type="entry name" value="OMEGA_ACTX_2"/>
    <property type="match status" value="1"/>
</dbReference>
<proteinExistence type="inferred from homology"/>
<sequence>MKFSKLSLTLALILTQAIFVLCGKINEDFMENGLESHALHDEIRKPIDTEKADAERGVVDCVLNTLGCSSDKDCCGMTPSCTLGICAPSVGGLVGGLLGRAL</sequence>
<keyword id="KW-0027">Amidation</keyword>
<keyword id="KW-0108">Calcium channel impairing toxin</keyword>
<keyword id="KW-1015">Disulfide bond</keyword>
<keyword id="KW-0872">Ion channel impairing toxin</keyword>
<keyword id="KW-0960">Knottin</keyword>
<keyword id="KW-0528">Neurotoxin</keyword>
<keyword id="KW-0964">Secreted</keyword>
<keyword id="KW-0732">Signal</keyword>
<keyword id="KW-0800">Toxin</keyword>
<keyword id="KW-1218">Voltage-gated calcium channel impairing toxin</keyword>